<accession>Q8C9E8</accession>
<name>CAHM6_MOUSE</name>
<organism>
    <name type="scientific">Mus musculus</name>
    <name type="common">Mouse</name>
    <dbReference type="NCBI Taxonomy" id="10090"/>
    <lineage>
        <taxon>Eukaryota</taxon>
        <taxon>Metazoa</taxon>
        <taxon>Chordata</taxon>
        <taxon>Craniata</taxon>
        <taxon>Vertebrata</taxon>
        <taxon>Euteleostomi</taxon>
        <taxon>Mammalia</taxon>
        <taxon>Eutheria</taxon>
        <taxon>Euarchontoglires</taxon>
        <taxon>Glires</taxon>
        <taxon>Rodentia</taxon>
        <taxon>Myomorpha</taxon>
        <taxon>Muroidea</taxon>
        <taxon>Muridae</taxon>
        <taxon>Murinae</taxon>
        <taxon>Mus</taxon>
        <taxon>Mus</taxon>
    </lineage>
</organism>
<feature type="chain" id="PRO_0000283782" description="Calcium homeostasis modulator protein 6">
    <location>
        <begin position="1"/>
        <end position="313"/>
    </location>
</feature>
<feature type="topological domain" description="Cytoplasmic" evidence="7">
    <location>
        <begin position="1"/>
        <end position="21"/>
    </location>
</feature>
<feature type="transmembrane region" description="Helical; Name=S1" evidence="1">
    <location>
        <begin position="22"/>
        <end position="37"/>
    </location>
</feature>
<feature type="topological domain" description="Extracellular" evidence="7">
    <location>
        <begin position="38"/>
        <end position="46"/>
    </location>
</feature>
<feature type="transmembrane region" description="Helical; Name=S2" evidence="1">
    <location>
        <begin position="47"/>
        <end position="68"/>
    </location>
</feature>
<feature type="topological domain" description="Cytoplasmic" evidence="7">
    <location>
        <begin position="69"/>
        <end position="101"/>
    </location>
</feature>
<feature type="transmembrane region" description="Helical; Name=S3" evidence="1">
    <location>
        <begin position="102"/>
        <end position="126"/>
    </location>
</feature>
<feature type="topological domain" description="Extracellular" evidence="7">
    <location>
        <begin position="127"/>
        <end position="167"/>
    </location>
</feature>
<feature type="transmembrane region" description="Helical; Name=S4" evidence="1">
    <location>
        <begin position="168"/>
        <end position="190"/>
    </location>
</feature>
<feature type="topological domain" description="Cytoplasmic" evidence="7">
    <location>
        <begin position="191"/>
        <end position="313"/>
    </location>
</feature>
<feature type="disulfide bond" evidence="1">
    <location>
        <begin position="41"/>
        <end position="125"/>
    </location>
</feature>
<feature type="disulfide bond" evidence="1">
    <location>
        <begin position="43"/>
        <end position="154"/>
    </location>
</feature>
<feature type="disulfide bond" evidence="1">
    <location>
        <begin position="138"/>
        <end position="145"/>
    </location>
</feature>
<feature type="mutagenesis site" description="Loss-of-function. Abolishes ATP release. Does not affect localization at the plasma membrane." evidence="4">
    <original>E</original>
    <variation>R</variation>
    <location>
        <position position="119"/>
    </location>
</feature>
<gene>
    <name evidence="6 8" type="primary">Calhm6</name>
    <name type="synonym">Fam26f</name>
</gene>
<reference key="1">
    <citation type="journal article" date="2005" name="Science">
        <title>The transcriptional landscape of the mammalian genome.</title>
        <authorList>
            <person name="Carninci P."/>
            <person name="Kasukawa T."/>
            <person name="Katayama S."/>
            <person name="Gough J."/>
            <person name="Frith M.C."/>
            <person name="Maeda N."/>
            <person name="Oyama R."/>
            <person name="Ravasi T."/>
            <person name="Lenhard B."/>
            <person name="Wells C."/>
            <person name="Kodzius R."/>
            <person name="Shimokawa K."/>
            <person name="Bajic V.B."/>
            <person name="Brenner S.E."/>
            <person name="Batalov S."/>
            <person name="Forrest A.R."/>
            <person name="Zavolan M."/>
            <person name="Davis M.J."/>
            <person name="Wilming L.G."/>
            <person name="Aidinis V."/>
            <person name="Allen J.E."/>
            <person name="Ambesi-Impiombato A."/>
            <person name="Apweiler R."/>
            <person name="Aturaliya R.N."/>
            <person name="Bailey T.L."/>
            <person name="Bansal M."/>
            <person name="Baxter L."/>
            <person name="Beisel K.W."/>
            <person name="Bersano T."/>
            <person name="Bono H."/>
            <person name="Chalk A.M."/>
            <person name="Chiu K.P."/>
            <person name="Choudhary V."/>
            <person name="Christoffels A."/>
            <person name="Clutterbuck D.R."/>
            <person name="Crowe M.L."/>
            <person name="Dalla E."/>
            <person name="Dalrymple B.P."/>
            <person name="de Bono B."/>
            <person name="Della Gatta G."/>
            <person name="di Bernardo D."/>
            <person name="Down T."/>
            <person name="Engstrom P."/>
            <person name="Fagiolini M."/>
            <person name="Faulkner G."/>
            <person name="Fletcher C.F."/>
            <person name="Fukushima T."/>
            <person name="Furuno M."/>
            <person name="Futaki S."/>
            <person name="Gariboldi M."/>
            <person name="Georgii-Hemming P."/>
            <person name="Gingeras T.R."/>
            <person name="Gojobori T."/>
            <person name="Green R.E."/>
            <person name="Gustincich S."/>
            <person name="Harbers M."/>
            <person name="Hayashi Y."/>
            <person name="Hensch T.K."/>
            <person name="Hirokawa N."/>
            <person name="Hill D."/>
            <person name="Huminiecki L."/>
            <person name="Iacono M."/>
            <person name="Ikeo K."/>
            <person name="Iwama A."/>
            <person name="Ishikawa T."/>
            <person name="Jakt M."/>
            <person name="Kanapin A."/>
            <person name="Katoh M."/>
            <person name="Kawasawa Y."/>
            <person name="Kelso J."/>
            <person name="Kitamura H."/>
            <person name="Kitano H."/>
            <person name="Kollias G."/>
            <person name="Krishnan S.P."/>
            <person name="Kruger A."/>
            <person name="Kummerfeld S.K."/>
            <person name="Kurochkin I.V."/>
            <person name="Lareau L.F."/>
            <person name="Lazarevic D."/>
            <person name="Lipovich L."/>
            <person name="Liu J."/>
            <person name="Liuni S."/>
            <person name="McWilliam S."/>
            <person name="Madan Babu M."/>
            <person name="Madera M."/>
            <person name="Marchionni L."/>
            <person name="Matsuda H."/>
            <person name="Matsuzawa S."/>
            <person name="Miki H."/>
            <person name="Mignone F."/>
            <person name="Miyake S."/>
            <person name="Morris K."/>
            <person name="Mottagui-Tabar S."/>
            <person name="Mulder N."/>
            <person name="Nakano N."/>
            <person name="Nakauchi H."/>
            <person name="Ng P."/>
            <person name="Nilsson R."/>
            <person name="Nishiguchi S."/>
            <person name="Nishikawa S."/>
            <person name="Nori F."/>
            <person name="Ohara O."/>
            <person name="Okazaki Y."/>
            <person name="Orlando V."/>
            <person name="Pang K.C."/>
            <person name="Pavan W.J."/>
            <person name="Pavesi G."/>
            <person name="Pesole G."/>
            <person name="Petrovsky N."/>
            <person name="Piazza S."/>
            <person name="Reed J."/>
            <person name="Reid J.F."/>
            <person name="Ring B.Z."/>
            <person name="Ringwald M."/>
            <person name="Rost B."/>
            <person name="Ruan Y."/>
            <person name="Salzberg S.L."/>
            <person name="Sandelin A."/>
            <person name="Schneider C."/>
            <person name="Schoenbach C."/>
            <person name="Sekiguchi K."/>
            <person name="Semple C.A."/>
            <person name="Seno S."/>
            <person name="Sessa L."/>
            <person name="Sheng Y."/>
            <person name="Shibata Y."/>
            <person name="Shimada H."/>
            <person name="Shimada K."/>
            <person name="Silva D."/>
            <person name="Sinclair B."/>
            <person name="Sperling S."/>
            <person name="Stupka E."/>
            <person name="Sugiura K."/>
            <person name="Sultana R."/>
            <person name="Takenaka Y."/>
            <person name="Taki K."/>
            <person name="Tammoja K."/>
            <person name="Tan S.L."/>
            <person name="Tang S."/>
            <person name="Taylor M.S."/>
            <person name="Tegner J."/>
            <person name="Teichmann S.A."/>
            <person name="Ueda H.R."/>
            <person name="van Nimwegen E."/>
            <person name="Verardo R."/>
            <person name="Wei C.L."/>
            <person name="Yagi K."/>
            <person name="Yamanishi H."/>
            <person name="Zabarovsky E."/>
            <person name="Zhu S."/>
            <person name="Zimmer A."/>
            <person name="Hide W."/>
            <person name="Bult C."/>
            <person name="Grimmond S.M."/>
            <person name="Teasdale R.D."/>
            <person name="Liu E.T."/>
            <person name="Brusic V."/>
            <person name="Quackenbush J."/>
            <person name="Wahlestedt C."/>
            <person name="Mattick J.S."/>
            <person name="Hume D.A."/>
            <person name="Kai C."/>
            <person name="Sasaki D."/>
            <person name="Tomaru Y."/>
            <person name="Fukuda S."/>
            <person name="Kanamori-Katayama M."/>
            <person name="Suzuki M."/>
            <person name="Aoki J."/>
            <person name="Arakawa T."/>
            <person name="Iida J."/>
            <person name="Imamura K."/>
            <person name="Itoh M."/>
            <person name="Kato T."/>
            <person name="Kawaji H."/>
            <person name="Kawagashira N."/>
            <person name="Kawashima T."/>
            <person name="Kojima M."/>
            <person name="Kondo S."/>
            <person name="Konno H."/>
            <person name="Nakano K."/>
            <person name="Ninomiya N."/>
            <person name="Nishio T."/>
            <person name="Okada M."/>
            <person name="Plessy C."/>
            <person name="Shibata K."/>
            <person name="Shiraki T."/>
            <person name="Suzuki S."/>
            <person name="Tagami M."/>
            <person name="Waki K."/>
            <person name="Watahiki A."/>
            <person name="Okamura-Oho Y."/>
            <person name="Suzuki H."/>
            <person name="Kawai J."/>
            <person name="Hayashizaki Y."/>
        </authorList>
    </citation>
    <scope>NUCLEOTIDE SEQUENCE [LARGE SCALE MRNA]</scope>
    <source>
        <strain>C57BL/6J</strain>
        <tissue>Thymus</tissue>
    </source>
</reference>
<reference key="2">
    <citation type="journal article" date="2004" name="Genome Res.">
        <title>The status, quality, and expansion of the NIH full-length cDNA project: the Mammalian Gene Collection (MGC).</title>
        <authorList>
            <consortium name="The MGC Project Team"/>
        </authorList>
    </citation>
    <scope>NUCLEOTIDE SEQUENCE [LARGE SCALE MRNA]</scope>
    <source>
        <strain>NMRI</strain>
        <tissue>Mammary tumor</tissue>
    </source>
</reference>
<reference key="3">
    <citation type="journal article" date="2010" name="J. Exp. Med.">
        <title>Identification of a polyI:C-inducible membrane protein that participates in dendritic cell-mediated natural killer cell activation.</title>
        <authorList>
            <person name="Ebihara T."/>
            <person name="Azuma M."/>
            <person name="Oshiumi H."/>
            <person name="Kasamatsu J."/>
            <person name="Iwabuchi K."/>
            <person name="Matsumoto K."/>
            <person name="Saito H."/>
            <person name="Taniguchi T."/>
            <person name="Matsumoto M."/>
            <person name="Seya T."/>
        </authorList>
    </citation>
    <scope>IDENTIFICATION</scope>
    <scope>FUNCTION</scope>
    <scope>SUBCELLULAR LOCATION</scope>
    <scope>GLYCOSYLATION</scope>
    <scope>TISSUE SPECIFICITY</scope>
</reference>
<reference key="4">
    <citation type="journal article" date="2023" name="EMBO J.">
        <title>The ion channel CALHM6 controls bacterial infection-induced cellular cross-talk at the immunological synapse.</title>
        <authorList>
            <person name="Danielli S."/>
            <person name="Ma Z."/>
            <person name="Pantazi E."/>
            <person name="Kumar A."/>
            <person name="Demarco B."/>
            <person name="Fischer F.A."/>
            <person name="Paudel U."/>
            <person name="Weissenrieder J."/>
            <person name="Lee R.J."/>
            <person name="Joyce S."/>
            <person name="Foskett J.K."/>
            <person name="Bezbradica J.S."/>
        </authorList>
    </citation>
    <scope>FUNCTION</scope>
    <scope>TRANSPORTER ACTIVITY</scope>
    <scope>ACTIVITY REGULATION</scope>
    <scope>SUBCELLULAR LOCATION</scope>
    <scope>INDUCTION</scope>
    <scope>DISRUPTION PHENOTYPE</scope>
    <scope>MUTAGENESIS OF GLU-119</scope>
</reference>
<evidence type="ECO:0000250" key="1">
    <source>
        <dbReference type="UniProtKB" id="Q5R3K3"/>
    </source>
</evidence>
<evidence type="ECO:0000255" key="2"/>
<evidence type="ECO:0000269" key="3">
    <source>
    </source>
</evidence>
<evidence type="ECO:0000269" key="4">
    <source>
    </source>
</evidence>
<evidence type="ECO:0000303" key="5">
    <source>
    </source>
</evidence>
<evidence type="ECO:0000303" key="6">
    <source>
    </source>
</evidence>
<evidence type="ECO:0000305" key="7"/>
<evidence type="ECO:0000312" key="8">
    <source>
        <dbReference type="MGI" id="MGI:2443082"/>
    </source>
</evidence>
<proteinExistence type="evidence at protein level"/>
<comment type="function">
    <text evidence="1 3 4">Pore-forming subunit of an ATP-permeable channel (PubMed:21059856, PubMed:36861806). In response to pathogen-derived and proinflammatory stimuli, relocates from intracellular compartments to NK-dendritic cell and NK-macrophage immune synapses where it mediates ATP efflux and NK cell activation involved in antimicrobial and antitumor responses (PubMed:21059856, PubMed:36861806). May assemble to form gap junction channel-like structures with gating and ion conductance likely regulated by membrane lipids and voltage rather than by extracellular calcium levels (By similarity).</text>
</comment>
<comment type="catalytic activity">
    <reaction evidence="4">
        <text>ATP(in) = ATP(out)</text>
        <dbReference type="Rhea" id="RHEA:75687"/>
        <dbReference type="ChEBI" id="CHEBI:30616"/>
    </reaction>
    <physiologicalReaction direction="left-to-right" evidence="4">
        <dbReference type="Rhea" id="RHEA:75688"/>
    </physiologicalReaction>
</comment>
<comment type="activity regulation">
    <text evidence="4">Inhibited by Gd(3+). Partially inhibited by divalent ions Ca(2+) and Ba(2+).</text>
</comment>
<comment type="subunit">
    <text evidence="1">Oligomerizes to form decameric and undecameric channels.</text>
</comment>
<comment type="subcellular location">
    <subcellularLocation>
        <location evidence="3 4">Cell membrane</location>
        <topology evidence="2">Multi-pass membrane protein</topology>
    </subcellularLocation>
    <text evidence="4">Recruited at immune synapses in response to pathogen-derived and proinflammatory stimuli.</text>
</comment>
<comment type="tissue specificity">
    <text evidence="3 4">Immune cells in primary and secondary lymphoid organs.</text>
</comment>
<comment type="induction">
    <text evidence="4">Up-regulated in macrophages and dendritic cells upon stimulation with type I IFN, Poly(I:C) and LPS. Down-regulated by anti-inflammatory stimuli.</text>
</comment>
<comment type="PTM">
    <text evidence="3">N-glycosylated.</text>
</comment>
<comment type="disruption phenotype">
    <text evidence="4">Knockout mice are born at the expected Mendelian ratio. They show delayed innate response to L.monocytogenes infection due to impaired activation of proinflammatory NK cells.</text>
</comment>
<comment type="similarity">
    <text evidence="7">Belongs to the CALHM family.</text>
</comment>
<protein>
    <recommendedName>
        <fullName>Calcium homeostasis modulator protein 6</fullName>
    </recommendedName>
    <alternativeName>
        <fullName evidence="5">IFN regulatory factor 3-dependent NK-activating molecule</fullName>
        <shortName evidence="5">INAM</shortName>
    </alternativeName>
    <alternativeName>
        <fullName evidence="5">Protein FAM26F</fullName>
    </alternativeName>
</protein>
<keyword id="KW-1003">Cell membrane</keyword>
<keyword id="KW-1015">Disulfide bond</keyword>
<keyword id="KW-0391">Immunity</keyword>
<keyword id="KW-0395">Inflammatory response</keyword>
<keyword id="KW-0399">Innate immunity</keyword>
<keyword id="KW-0407">Ion channel</keyword>
<keyword id="KW-0406">Ion transport</keyword>
<keyword id="KW-0472">Membrane</keyword>
<keyword id="KW-1185">Reference proteome</keyword>
<keyword id="KW-0812">Transmembrane</keyword>
<keyword id="KW-1133">Transmembrane helix</keyword>
<keyword id="KW-0813">Transport</keyword>
<dbReference type="EMBL" id="AK042270">
    <property type="protein sequence ID" value="BAC31209.1"/>
    <property type="molecule type" value="mRNA"/>
</dbReference>
<dbReference type="EMBL" id="BC095946">
    <property type="protein sequence ID" value="AAH95946.1"/>
    <property type="molecule type" value="mRNA"/>
</dbReference>
<dbReference type="CCDS" id="CCDS23775.1"/>
<dbReference type="RefSeq" id="NP_780658.2">
    <property type="nucleotide sequence ID" value="NM_175449.4"/>
</dbReference>
<dbReference type="SMR" id="Q8C9E8"/>
<dbReference type="FunCoup" id="Q8C9E8">
    <property type="interactions" value="3"/>
</dbReference>
<dbReference type="STRING" id="10090.ENSMUSP00000051575"/>
<dbReference type="iPTMnet" id="Q8C9E8"/>
<dbReference type="PhosphoSitePlus" id="Q8C9E8"/>
<dbReference type="SwissPalm" id="Q8C9E8"/>
<dbReference type="PaxDb" id="10090-ENSMUSP00000051575"/>
<dbReference type="ProteomicsDB" id="265426"/>
<dbReference type="Antibodypedia" id="19421">
    <property type="antibodies" value="30 antibodies from 16 providers"/>
</dbReference>
<dbReference type="Ensembl" id="ENSMUST00000062784.8">
    <property type="protein sequence ID" value="ENSMUSP00000051575.7"/>
    <property type="gene ID" value="ENSMUSG00000046031.8"/>
</dbReference>
<dbReference type="GeneID" id="215900"/>
<dbReference type="KEGG" id="mmu:215900"/>
<dbReference type="UCSC" id="uc007eur.2">
    <property type="organism name" value="mouse"/>
</dbReference>
<dbReference type="AGR" id="MGI:2443082"/>
<dbReference type="CTD" id="441168"/>
<dbReference type="MGI" id="MGI:2443082">
    <property type="gene designation" value="Calhm6"/>
</dbReference>
<dbReference type="VEuPathDB" id="HostDB:ENSMUSG00000046031"/>
<dbReference type="eggNOG" id="ENOG502QSG7">
    <property type="taxonomic scope" value="Eukaryota"/>
</dbReference>
<dbReference type="GeneTree" id="ENSGT01030000234610"/>
<dbReference type="HOGENOM" id="CLU_069286_2_0_1"/>
<dbReference type="InParanoid" id="Q8C9E8"/>
<dbReference type="OMA" id="KFWKIYS"/>
<dbReference type="OrthoDB" id="5962981at2759"/>
<dbReference type="PhylomeDB" id="Q8C9E8"/>
<dbReference type="TreeFam" id="TF329085"/>
<dbReference type="BioGRID-ORCS" id="215900">
    <property type="hits" value="2 hits in 77 CRISPR screens"/>
</dbReference>
<dbReference type="PRO" id="PR:Q8C9E8"/>
<dbReference type="Proteomes" id="UP000000589">
    <property type="component" value="Chromosome 10"/>
</dbReference>
<dbReference type="RNAct" id="Q8C9E8">
    <property type="molecule type" value="protein"/>
</dbReference>
<dbReference type="Bgee" id="ENSMUSG00000046031">
    <property type="expression patterns" value="Expressed in peripheral lymph node and 78 other cell types or tissues"/>
</dbReference>
<dbReference type="GO" id="GO:0001772">
    <property type="term" value="C:immunological synapse"/>
    <property type="evidence" value="ECO:0000314"/>
    <property type="project" value="UniProtKB"/>
</dbReference>
<dbReference type="GO" id="GO:0022832">
    <property type="term" value="F:voltage-gated channel activity"/>
    <property type="evidence" value="ECO:0000314"/>
    <property type="project" value="UniProtKB"/>
</dbReference>
<dbReference type="GO" id="GO:1904669">
    <property type="term" value="P:ATP export"/>
    <property type="evidence" value="ECO:0000315"/>
    <property type="project" value="UniProtKB"/>
</dbReference>
<dbReference type="GO" id="GO:0006954">
    <property type="term" value="P:inflammatory response"/>
    <property type="evidence" value="ECO:0007669"/>
    <property type="project" value="UniProtKB-KW"/>
</dbReference>
<dbReference type="GO" id="GO:0045087">
    <property type="term" value="P:innate immune response"/>
    <property type="evidence" value="ECO:0007669"/>
    <property type="project" value="UniProtKB-KW"/>
</dbReference>
<dbReference type="GO" id="GO:0034220">
    <property type="term" value="P:monoatomic ion transmembrane transport"/>
    <property type="evidence" value="ECO:0007669"/>
    <property type="project" value="UniProtKB-KW"/>
</dbReference>
<dbReference type="GO" id="GO:0002727">
    <property type="term" value="P:regulation of natural killer cell cytokine production"/>
    <property type="evidence" value="ECO:0000315"/>
    <property type="project" value="UniProtKB"/>
</dbReference>
<dbReference type="InterPro" id="IPR029569">
    <property type="entry name" value="CALHM"/>
</dbReference>
<dbReference type="PANTHER" id="PTHR32261">
    <property type="entry name" value="CALCIUM HOMEOSTASIS MODULATOR PROTEIN"/>
    <property type="match status" value="1"/>
</dbReference>
<dbReference type="PANTHER" id="PTHR32261:SF4">
    <property type="entry name" value="CALCIUM HOMEOSTASIS MODULATOR PROTEIN 6"/>
    <property type="match status" value="1"/>
</dbReference>
<dbReference type="Pfam" id="PF14798">
    <property type="entry name" value="Ca_hom_mod"/>
    <property type="match status" value="1"/>
</dbReference>
<sequence length="313" mass="34956">MEKFKAVLDLQRKHRNALGYSLVTLLTAGGEKIFSSVVFQCPCTATWNLPYGLVFLLVPALALFLLGYALSARTWRLLTGCCSRSARFSSGLRSAFVCAQLSMTAAFAPLTWVAVALLEGSFYQCAVSGSARLAPYLCKGRDPNCNATLPQAPCNKQKVEMQEILSQLKAQSQVFGWILIAAVIILLLLVKSVTRCFSPVSYLQLKFWEIYWEKEKQILQNQAAENATQLAEENVRCFFECSKPKECNTPSSKDWQEISALYTFNPKNQFYSMLHKYVSREEMSGSVRSVEGDAVIPALGFVDDMSMTNTHEL</sequence>